<protein>
    <recommendedName>
        <fullName>Glypican-4</fullName>
    </recommendedName>
    <alternativeName>
        <fullName>K-glypican</fullName>
    </alternativeName>
    <component>
        <recommendedName>
            <fullName>Secreted glypican-4</fullName>
        </recommendedName>
    </component>
</protein>
<evidence type="ECO:0000250" key="1"/>
<evidence type="ECO:0000255" key="2"/>
<evidence type="ECO:0000269" key="3">
    <source>
    </source>
</evidence>
<evidence type="ECO:0000269" key="4">
    <source>
    </source>
</evidence>
<evidence type="ECO:0000269" key="5">
    <source>
    </source>
</evidence>
<evidence type="ECO:0000269" key="6">
    <source>
    </source>
</evidence>
<evidence type="ECO:0000269" key="7">
    <source ref="2"/>
</evidence>
<evidence type="ECO:0000269" key="8">
    <source ref="3"/>
</evidence>
<evidence type="ECO:0000303" key="9">
    <source>
    </source>
</evidence>
<evidence type="ECO:0000305" key="10"/>
<evidence type="ECO:0007744" key="11">
    <source>
    </source>
</evidence>
<proteinExistence type="evidence at protein level"/>
<keyword id="KW-0025">Alternative splicing</keyword>
<keyword id="KW-1003">Cell membrane</keyword>
<keyword id="KW-0209">Deafness</keyword>
<keyword id="KW-0225">Disease variant</keyword>
<keyword id="KW-0325">Glycoprotein</keyword>
<keyword id="KW-0336">GPI-anchor</keyword>
<keyword id="KW-0357">Heparan sulfate</keyword>
<keyword id="KW-0991">Intellectual disability</keyword>
<keyword id="KW-0449">Lipoprotein</keyword>
<keyword id="KW-0472">Membrane</keyword>
<keyword id="KW-0597">Phosphoprotein</keyword>
<keyword id="KW-0654">Proteoglycan</keyword>
<keyword id="KW-1267">Proteomics identification</keyword>
<keyword id="KW-1185">Reference proteome</keyword>
<keyword id="KW-0964">Secreted</keyword>
<keyword id="KW-0732">Signal</keyword>
<comment type="function">
    <text evidence="1">Cell surface proteoglycan that bears heparan sulfate. May be involved in the development of kidney tubules and of the central nervous system (By similarity).</text>
</comment>
<comment type="interaction">
    <interactant intactId="EBI-3050469">
        <id>O75487</id>
    </interactant>
    <interactant intactId="EBI-3046690">
        <id>Q9Y625</id>
        <label>GPC6</label>
    </interactant>
    <organismsDiffer>false</organismsDiffer>
    <experiments>4</experiments>
</comment>
<comment type="interaction">
    <interactant intactId="EBI-3050469">
        <id>O75487</id>
    </interactant>
    <interactant intactId="EBI-79165">
        <id>Q9NRD5</id>
        <label>PICK1</label>
    </interactant>
    <organismsDiffer>false</organismsDiffer>
    <experiments>3</experiments>
</comment>
<comment type="subcellular location">
    <subcellularLocation>
        <location evidence="1">Cell membrane</location>
        <topology evidence="1">Lipid-anchor</topology>
        <topology evidence="1">GPI-anchor</topology>
        <orientation evidence="1">Extracellular side</orientation>
    </subcellularLocation>
</comment>
<comment type="subcellular location">
    <molecule>Secreted glypican-4</molecule>
    <subcellularLocation>
        <location evidence="1">Secreted</location>
        <location evidence="1">Extracellular space</location>
    </subcellularLocation>
</comment>
<comment type="alternative products">
    <event type="alternative splicing"/>
    <isoform>
        <id>O75487-1</id>
        <name>1</name>
        <sequence type="displayed"/>
    </isoform>
    <isoform>
        <id>O75487-2</id>
        <name>2</name>
        <sequence type="described" ref="VSP_056570"/>
    </isoform>
</comment>
<comment type="disease" evidence="5">
    <disease id="DI-05580">
        <name>Keipert syndrome</name>
        <acronym>KPTS</acronym>
        <description>An X-linked recessive syndrome characterized by craniofacial and digital abnormalities. Clinical features include a prominent forehead, a flat midface, hypertelorism, a broad nose, downturned corners of mouth, and widening of all distal phalanges. Additional variable features are cognitive impairment and sensorineural deafness.</description>
        <dbReference type="MIM" id="301026"/>
    </disease>
    <text>The disease is caused by variants affecting the gene represented in this entry.</text>
</comment>
<comment type="similarity">
    <text evidence="10">Belongs to the glypican family.</text>
</comment>
<feature type="signal peptide" evidence="2">
    <location>
        <begin position="1"/>
        <end position="18"/>
    </location>
</feature>
<feature type="chain" id="PRO_0000012315" description="Glypican-4">
    <location>
        <begin position="19"/>
        <end position="529"/>
    </location>
</feature>
<feature type="chain" id="PRO_0000333847" description="Secreted glypican-4">
    <location>
        <begin position="19"/>
        <end status="unknown"/>
    </location>
</feature>
<feature type="propeptide" id="PRO_0000012316" description="Removed in mature form" evidence="2">
    <location>
        <begin position="530"/>
        <end position="556"/>
    </location>
</feature>
<feature type="modified residue" description="Phosphoserine" evidence="11">
    <location>
        <position position="357"/>
    </location>
</feature>
<feature type="lipid moiety-binding region" description="GPI-anchor amidated serine" evidence="2">
    <location>
        <position position="529"/>
    </location>
</feature>
<feature type="glycosylation site" description="O-linked (Xyl...) (glycosaminoglycan) serine" evidence="2">
    <location>
        <position position="494"/>
    </location>
</feature>
<feature type="glycosylation site" description="O-linked (Xyl...) (glycosaminoglycan) serine" evidence="2">
    <location>
        <position position="498"/>
    </location>
</feature>
<feature type="glycosylation site" description="O-linked (Xyl...) (glycosaminoglycan) serine" evidence="2">
    <location>
        <position position="500"/>
    </location>
</feature>
<feature type="glycosylation site" description="N-linked (GlcNAc...) asparagine" evidence="2">
    <location>
        <position position="514"/>
    </location>
</feature>
<feature type="splice variant" id="VSP_056570" description="In isoform 2." evidence="9">
    <location>
        <begin position="1"/>
        <end position="70"/>
    </location>
</feature>
<feature type="sequence variant" id="VAR_016191" description="In dbSNP:rs1129980." evidence="3 6 7 8">
    <original>E</original>
    <variation>D</variation>
    <location>
        <position position="391"/>
    </location>
</feature>
<feature type="sequence variant" id="VAR_083241" description="Found in a patient with features of Robinow syndrome; uncertain significance; dbSNP:rs1556022962." evidence="4">
    <original>R</original>
    <variation>K</variation>
    <location>
        <position position="412"/>
    </location>
</feature>
<feature type="sequence variant" id="VAR_016192" description="In dbSNP:rs1048369." evidence="3 6 8">
    <original>A</original>
    <variation>V</variation>
    <location>
        <position position="442"/>
    </location>
</feature>
<feature type="sequence variant" id="VAR_082622" description="In KPTS; increased proteasomal degradation." evidence="5">
    <location>
        <begin position="496"/>
        <end position="556"/>
    </location>
</feature>
<feature type="sequence variant" id="VAR_082623" description="In KPTS; increased proteasomal degradation." evidence="5">
    <location>
        <begin position="506"/>
        <end position="556"/>
    </location>
</feature>
<organism>
    <name type="scientific">Homo sapiens</name>
    <name type="common">Human</name>
    <dbReference type="NCBI Taxonomy" id="9606"/>
    <lineage>
        <taxon>Eukaryota</taxon>
        <taxon>Metazoa</taxon>
        <taxon>Chordata</taxon>
        <taxon>Craniata</taxon>
        <taxon>Vertebrata</taxon>
        <taxon>Euteleostomi</taxon>
        <taxon>Mammalia</taxon>
        <taxon>Eutheria</taxon>
        <taxon>Euarchontoglires</taxon>
        <taxon>Primates</taxon>
        <taxon>Haplorrhini</taxon>
        <taxon>Catarrhini</taxon>
        <taxon>Hominidae</taxon>
        <taxon>Homo</taxon>
    </lineage>
</organism>
<gene>
    <name type="primary">GPC4</name>
    <name type="ORF">UNQ474/PRO937</name>
</gene>
<accession>O75487</accession>
<accession>B2R6J7</accession>
<accession>B4E2C0</accession>
<accession>Q6ZMA6</accession>
<accession>Q96L43</accession>
<accession>Q9NU08</accession>
<accession>Q9UJN1</accession>
<accession>Q9UPD9</accession>
<sequence length="556" mass="62412">MARFGLPALLCTLAVLSAALLAAELKSKSCSEVRRLYVSKGFNKNDAPLHEINGDHLKICPQGSTCCSQEMEEKYSLQSKDDFKSVVSEQCNHLQAVFASRYKKFDEFFKELLENAEKSLNDMFVKTYGHLYMQNSELFKDLFVELKRYYVVGNVNLEEMLNDFWARLLERMFRLVNSQYHFTDEYLECVSKYTEQLKPFGDVPRKLKLQVTRAFVAARTFAQGLAVAGDVVSKVSVVNPTAQCTHALLKMIYCSHCRGLVTVKPCYNYCSNIMRGCLANQGDLDFEWNNFIDAMLMVAERLEGPFNIESVMDPIDVKISDAIMNMQDNSVQVSQKVFQGCGPPKPLPAGRISRSISESAFSARFRPHHPEERPTTAAGTSLDRLVTDVKEKLKQAKKFWSSLPSNVCNDERMAAGNGNEDDCWNGKGKSRYLFAVTGNGLANQGNNPEVQVDTSKPDILILRQIMALRVMTSKMKNAYNGNDVDFFDISDESSGEGSGSGCEYQQCPSEFDYNATDHAGKSANEKADSAGVRPGAQAYLLTVFCILFLVMQREWR</sequence>
<dbReference type="EMBL" id="AF030186">
    <property type="protein sequence ID" value="AAC69991.1"/>
    <property type="molecule type" value="mRNA"/>
</dbReference>
<dbReference type="EMBL" id="AF064826">
    <property type="protein sequence ID" value="AAC31899.1"/>
    <property type="molecule type" value="mRNA"/>
</dbReference>
<dbReference type="EMBL" id="AY358507">
    <property type="protein sequence ID" value="AAQ88871.1"/>
    <property type="molecule type" value="mRNA"/>
</dbReference>
<dbReference type="EMBL" id="AY052833">
    <property type="protein sequence ID" value="AAL11018.1"/>
    <property type="molecule type" value="mRNA"/>
</dbReference>
<dbReference type="EMBL" id="AK304207">
    <property type="protein sequence ID" value="BAG65082.1"/>
    <property type="molecule type" value="mRNA"/>
</dbReference>
<dbReference type="EMBL" id="AK312605">
    <property type="protein sequence ID" value="BAG35494.1"/>
    <property type="molecule type" value="mRNA"/>
</dbReference>
<dbReference type="EMBL" id="AL034400">
    <property type="status" value="NOT_ANNOTATED_CDS"/>
    <property type="molecule type" value="Genomic_DNA"/>
</dbReference>
<dbReference type="EMBL" id="AL109623">
    <property type="status" value="NOT_ANNOTATED_CDS"/>
    <property type="molecule type" value="Genomic_DNA"/>
</dbReference>
<dbReference type="EMBL" id="CH471107">
    <property type="protein sequence ID" value="EAX11772.1"/>
    <property type="molecule type" value="Genomic_DNA"/>
</dbReference>
<dbReference type="EMBL" id="BC017166">
    <property type="protein sequence ID" value="AAH17166.1"/>
    <property type="molecule type" value="mRNA"/>
</dbReference>
<dbReference type="CCDS" id="CCDS14637.1">
    <molecule id="O75487-1"/>
</dbReference>
<dbReference type="RefSeq" id="NP_001439.2">
    <molecule id="O75487-1"/>
    <property type="nucleotide sequence ID" value="NM_001448.2"/>
</dbReference>
<dbReference type="SMR" id="O75487"/>
<dbReference type="BioGRID" id="108530">
    <property type="interactions" value="87"/>
</dbReference>
<dbReference type="FunCoup" id="O75487">
    <property type="interactions" value="1318"/>
</dbReference>
<dbReference type="IntAct" id="O75487">
    <property type="interactions" value="51"/>
</dbReference>
<dbReference type="MINT" id="O75487"/>
<dbReference type="STRING" id="9606.ENSP00000359864"/>
<dbReference type="GlyCosmos" id="O75487">
    <property type="glycosylation" value="5 sites, 2 glycans"/>
</dbReference>
<dbReference type="GlyGen" id="O75487">
    <property type="glycosylation" value="10 sites, 3 O-linked glycans (5 sites)"/>
</dbReference>
<dbReference type="iPTMnet" id="O75487"/>
<dbReference type="PhosphoSitePlus" id="O75487"/>
<dbReference type="SwissPalm" id="O75487"/>
<dbReference type="BioMuta" id="GPC4"/>
<dbReference type="jPOST" id="O75487"/>
<dbReference type="MassIVE" id="O75487"/>
<dbReference type="PaxDb" id="9606-ENSP00000359864"/>
<dbReference type="PeptideAtlas" id="O75487"/>
<dbReference type="ProteomicsDB" id="50045">
    <molecule id="O75487-1"/>
</dbReference>
<dbReference type="ProteomicsDB" id="5807"/>
<dbReference type="Pumba" id="O75487"/>
<dbReference type="Antibodypedia" id="30267">
    <property type="antibodies" value="405 antibodies from 30 providers"/>
</dbReference>
<dbReference type="DNASU" id="2239"/>
<dbReference type="Ensembl" id="ENST00000370828.4">
    <molecule id="O75487-1"/>
    <property type="protein sequence ID" value="ENSP00000359864.3"/>
    <property type="gene ID" value="ENSG00000076716.9"/>
</dbReference>
<dbReference type="GeneID" id="2239"/>
<dbReference type="KEGG" id="hsa:2239"/>
<dbReference type="MANE-Select" id="ENST00000370828.4">
    <property type="protein sequence ID" value="ENSP00000359864.3"/>
    <property type="RefSeq nucleotide sequence ID" value="NM_001448.3"/>
    <property type="RefSeq protein sequence ID" value="NP_001439.2"/>
</dbReference>
<dbReference type="UCSC" id="uc004exc.2">
    <molecule id="O75487-1"/>
    <property type="organism name" value="human"/>
</dbReference>
<dbReference type="AGR" id="HGNC:4452"/>
<dbReference type="CTD" id="2239"/>
<dbReference type="DisGeNET" id="2239"/>
<dbReference type="GeneCards" id="GPC4"/>
<dbReference type="HGNC" id="HGNC:4452">
    <property type="gene designation" value="GPC4"/>
</dbReference>
<dbReference type="HPA" id="ENSG00000076716">
    <property type="expression patterns" value="Low tissue specificity"/>
</dbReference>
<dbReference type="MalaCards" id="GPC4"/>
<dbReference type="MIM" id="300168">
    <property type="type" value="gene"/>
</dbReference>
<dbReference type="MIM" id="301026">
    <property type="type" value="phenotype"/>
</dbReference>
<dbReference type="neXtProt" id="NX_O75487"/>
<dbReference type="OpenTargets" id="ENSG00000076716"/>
<dbReference type="Orphanet" id="2662">
    <property type="disease" value="Keipert syndrome"/>
</dbReference>
<dbReference type="Orphanet" id="373">
    <property type="disease" value="Simpson-Golabi-Behmel syndrome"/>
</dbReference>
<dbReference type="PharmGKB" id="PA28833"/>
<dbReference type="VEuPathDB" id="HostDB:ENSG00000076716"/>
<dbReference type="eggNOG" id="KOG3821">
    <property type="taxonomic scope" value="Eukaryota"/>
</dbReference>
<dbReference type="GeneTree" id="ENSGT01050000244897"/>
<dbReference type="HOGENOM" id="CLU_024658_2_0_1"/>
<dbReference type="InParanoid" id="O75487"/>
<dbReference type="OMA" id="WNHFVEA"/>
<dbReference type="OrthoDB" id="10010764at2759"/>
<dbReference type="PAN-GO" id="O75487">
    <property type="GO annotations" value="6 GO annotations based on evolutionary models"/>
</dbReference>
<dbReference type="PhylomeDB" id="O75487"/>
<dbReference type="TreeFam" id="TF105317"/>
<dbReference type="PathwayCommons" id="O75487"/>
<dbReference type="Reactome" id="R-HSA-1971475">
    <property type="pathway name" value="A tetrasaccharide linker sequence is required for GAG synthesis"/>
</dbReference>
<dbReference type="Reactome" id="R-HSA-2022928">
    <property type="pathway name" value="HS-GAG biosynthesis"/>
</dbReference>
<dbReference type="Reactome" id="R-HSA-2024096">
    <property type="pathway name" value="HS-GAG degradation"/>
</dbReference>
<dbReference type="Reactome" id="R-HSA-3560783">
    <property type="pathway name" value="Defective B4GALT7 causes EDS, progeroid type"/>
</dbReference>
<dbReference type="Reactome" id="R-HSA-3560801">
    <property type="pathway name" value="Defective B3GAT3 causes JDSSDHD"/>
</dbReference>
<dbReference type="Reactome" id="R-HSA-3656237">
    <property type="pathway name" value="Defective EXT2 causes exostoses 2"/>
</dbReference>
<dbReference type="Reactome" id="R-HSA-3656253">
    <property type="pathway name" value="Defective EXT1 causes exostoses 1, TRPS2 and CHDS"/>
</dbReference>
<dbReference type="Reactome" id="R-HSA-4420332">
    <property type="pathway name" value="Defective B3GALT6 causes EDSP2 and SEMDJL1"/>
</dbReference>
<dbReference type="Reactome" id="R-HSA-9694614">
    <property type="pathway name" value="Attachment and Entry"/>
</dbReference>
<dbReference type="Reactome" id="R-HSA-975634">
    <property type="pathway name" value="Retinoid metabolism and transport"/>
</dbReference>
<dbReference type="Reactome" id="R-HSA-9820960">
    <property type="pathway name" value="Respiratory syncytial virus (RSV) attachment and entry"/>
</dbReference>
<dbReference type="Reactome" id="R-HSA-9833110">
    <property type="pathway name" value="RSV-host interactions"/>
</dbReference>
<dbReference type="SignaLink" id="O75487"/>
<dbReference type="SIGNOR" id="O75487"/>
<dbReference type="BioGRID-ORCS" id="2239">
    <property type="hits" value="6 hits in 763 CRISPR screens"/>
</dbReference>
<dbReference type="ChiTaRS" id="GPC4">
    <property type="organism name" value="human"/>
</dbReference>
<dbReference type="GeneWiki" id="Glypican_4"/>
<dbReference type="GenomeRNAi" id="2239"/>
<dbReference type="Pharos" id="O75487">
    <property type="development level" value="Tbio"/>
</dbReference>
<dbReference type="PRO" id="PR:O75487"/>
<dbReference type="Proteomes" id="UP000005640">
    <property type="component" value="Chromosome X"/>
</dbReference>
<dbReference type="RNAct" id="O75487">
    <property type="molecule type" value="protein"/>
</dbReference>
<dbReference type="Bgee" id="ENSG00000076716">
    <property type="expression patterns" value="Expressed in ventricular zone and 155 other cell types or tissues"/>
</dbReference>
<dbReference type="GO" id="GO:0009986">
    <property type="term" value="C:cell surface"/>
    <property type="evidence" value="ECO:0000318"/>
    <property type="project" value="GO_Central"/>
</dbReference>
<dbReference type="GO" id="GO:0009897">
    <property type="term" value="C:external side of plasma membrane"/>
    <property type="evidence" value="ECO:0000314"/>
    <property type="project" value="MGI"/>
</dbReference>
<dbReference type="GO" id="GO:0070062">
    <property type="term" value="C:extracellular exosome"/>
    <property type="evidence" value="ECO:0007005"/>
    <property type="project" value="UniProtKB"/>
</dbReference>
<dbReference type="GO" id="GO:0098978">
    <property type="term" value="C:glutamatergic synapse"/>
    <property type="evidence" value="ECO:0007669"/>
    <property type="project" value="Ensembl"/>
</dbReference>
<dbReference type="GO" id="GO:0005796">
    <property type="term" value="C:Golgi lumen"/>
    <property type="evidence" value="ECO:0000304"/>
    <property type="project" value="Reactome"/>
</dbReference>
<dbReference type="GO" id="GO:0043202">
    <property type="term" value="C:lysosomal lumen"/>
    <property type="evidence" value="ECO:0000304"/>
    <property type="project" value="Reactome"/>
</dbReference>
<dbReference type="GO" id="GO:0005634">
    <property type="term" value="C:nucleus"/>
    <property type="evidence" value="ECO:0007005"/>
    <property type="project" value="UniProtKB"/>
</dbReference>
<dbReference type="GO" id="GO:0005886">
    <property type="term" value="C:plasma membrane"/>
    <property type="evidence" value="ECO:0000304"/>
    <property type="project" value="Reactome"/>
</dbReference>
<dbReference type="GO" id="GO:0045202">
    <property type="term" value="C:synapse"/>
    <property type="evidence" value="ECO:0000318"/>
    <property type="project" value="GO_Central"/>
</dbReference>
<dbReference type="GO" id="GO:0015026">
    <property type="term" value="F:coreceptor activity"/>
    <property type="evidence" value="ECO:0000303"/>
    <property type="project" value="ParkinsonsUK-UCL"/>
</dbReference>
<dbReference type="GO" id="GO:0016477">
    <property type="term" value="P:cell migration"/>
    <property type="evidence" value="ECO:0000318"/>
    <property type="project" value="GO_Central"/>
</dbReference>
<dbReference type="GO" id="GO:0098696">
    <property type="term" value="P:regulation of neurotransmitter receptor localization to postsynaptic specialization membrane"/>
    <property type="evidence" value="ECO:0000318"/>
    <property type="project" value="GO_Central"/>
</dbReference>
<dbReference type="GO" id="GO:1905606">
    <property type="term" value="P:regulation of presynapse assembly"/>
    <property type="evidence" value="ECO:0000318"/>
    <property type="project" value="GO_Central"/>
</dbReference>
<dbReference type="GO" id="GO:0009966">
    <property type="term" value="P:regulation of signal transduction"/>
    <property type="evidence" value="ECO:0007669"/>
    <property type="project" value="InterPro"/>
</dbReference>
<dbReference type="GO" id="GO:0099560">
    <property type="term" value="P:synaptic membrane adhesion"/>
    <property type="evidence" value="ECO:0000318"/>
    <property type="project" value="GO_Central"/>
</dbReference>
<dbReference type="GO" id="GO:0016055">
    <property type="term" value="P:Wnt signaling pathway"/>
    <property type="evidence" value="ECO:0000315"/>
    <property type="project" value="UniProtKB"/>
</dbReference>
<dbReference type="InterPro" id="IPR001863">
    <property type="entry name" value="Glypican"/>
</dbReference>
<dbReference type="InterPro" id="IPR019803">
    <property type="entry name" value="Glypican_CS"/>
</dbReference>
<dbReference type="PANTHER" id="PTHR10822">
    <property type="entry name" value="GLYPICAN"/>
    <property type="match status" value="1"/>
</dbReference>
<dbReference type="PANTHER" id="PTHR10822:SF25">
    <property type="entry name" value="GLYPICAN-4"/>
    <property type="match status" value="1"/>
</dbReference>
<dbReference type="Pfam" id="PF01153">
    <property type="entry name" value="Glypican"/>
    <property type="match status" value="1"/>
</dbReference>
<dbReference type="PROSITE" id="PS01207">
    <property type="entry name" value="GLYPICAN"/>
    <property type="match status" value="1"/>
</dbReference>
<reference key="1">
    <citation type="journal article" date="1998" name="Genomics">
        <title>GPC4, the gene for human K-glypican, flanks GPC3 on Xq26: deletion of the GPC3-GPC4 gene cluster in one family with Simpson-Golabi-Behmel syndrome.</title>
        <authorList>
            <person name="Veugelers M."/>
            <person name="Vermeesch J."/>
            <person name="Watanabe K."/>
            <person name="Yamaguchi Y."/>
            <person name="Marynen P."/>
            <person name="David G."/>
        </authorList>
    </citation>
    <scope>NUCLEOTIDE SEQUENCE [MRNA] (ISOFORM 1)</scope>
    <scope>VARIANTS ASP-391 AND VAL-442</scope>
    <source>
        <tissue>Brain</tissue>
    </source>
</reference>
<reference key="2">
    <citation type="submission" date="1998-05" db="EMBL/GenBank/DDBJ databases">
        <authorList>
            <person name="Pilia G."/>
            <person name="Mazzarella R."/>
            <person name="Huber R."/>
            <person name="Crisponi L."/>
            <person name="Lindsay S."/>
            <person name="Ireland M."/>
            <person name="Cao A."/>
            <person name="Schlessinger D."/>
        </authorList>
    </citation>
    <scope>NUCLEOTIDE SEQUENCE [MRNA] (ISOFORM 1)</scope>
    <scope>VARIANT ASP-391</scope>
</reference>
<reference key="3">
    <citation type="submission" date="2001-08" db="EMBL/GenBank/DDBJ databases">
        <authorList>
            <person name="Zhang B."/>
            <person name="Feng Z."/>
            <person name="Zhou Y."/>
            <person name="Peng X."/>
            <person name="Yuan J."/>
            <person name="Qiang B."/>
        </authorList>
    </citation>
    <scope>NUCLEOTIDE SEQUENCE [MRNA] (ISOFORM 1)</scope>
    <scope>VARIANTS ASP-391 AND VAL-442</scope>
</reference>
<reference key="4">
    <citation type="journal article" date="2003" name="Genome Res.">
        <title>The secreted protein discovery initiative (SPDI), a large-scale effort to identify novel human secreted and transmembrane proteins: a bioinformatics assessment.</title>
        <authorList>
            <person name="Clark H.F."/>
            <person name="Gurney A.L."/>
            <person name="Abaya E."/>
            <person name="Baker K."/>
            <person name="Baldwin D.T."/>
            <person name="Brush J."/>
            <person name="Chen J."/>
            <person name="Chow B."/>
            <person name="Chui C."/>
            <person name="Crowley C."/>
            <person name="Currell B."/>
            <person name="Deuel B."/>
            <person name="Dowd P."/>
            <person name="Eaton D."/>
            <person name="Foster J.S."/>
            <person name="Grimaldi C."/>
            <person name="Gu Q."/>
            <person name="Hass P.E."/>
            <person name="Heldens S."/>
            <person name="Huang A."/>
            <person name="Kim H.S."/>
            <person name="Klimowski L."/>
            <person name="Jin Y."/>
            <person name="Johnson S."/>
            <person name="Lee J."/>
            <person name="Lewis L."/>
            <person name="Liao D."/>
            <person name="Mark M.R."/>
            <person name="Robbie E."/>
            <person name="Sanchez C."/>
            <person name="Schoenfeld J."/>
            <person name="Seshagiri S."/>
            <person name="Simmons L."/>
            <person name="Singh J."/>
            <person name="Smith V."/>
            <person name="Stinson J."/>
            <person name="Vagts A."/>
            <person name="Vandlen R.L."/>
            <person name="Watanabe C."/>
            <person name="Wieand D."/>
            <person name="Woods K."/>
            <person name="Xie M.-H."/>
            <person name="Yansura D.G."/>
            <person name="Yi S."/>
            <person name="Yu G."/>
            <person name="Yuan J."/>
            <person name="Zhang M."/>
            <person name="Zhang Z."/>
            <person name="Goddard A.D."/>
            <person name="Wood W.I."/>
            <person name="Godowski P.J."/>
            <person name="Gray A.M."/>
        </authorList>
    </citation>
    <scope>NUCLEOTIDE SEQUENCE [LARGE SCALE MRNA] (ISOFORM 1)</scope>
</reference>
<reference key="5">
    <citation type="journal article" date="2004" name="Nat. Genet.">
        <title>Complete sequencing and characterization of 21,243 full-length human cDNAs.</title>
        <authorList>
            <person name="Ota T."/>
            <person name="Suzuki Y."/>
            <person name="Nishikawa T."/>
            <person name="Otsuki T."/>
            <person name="Sugiyama T."/>
            <person name="Irie R."/>
            <person name="Wakamatsu A."/>
            <person name="Hayashi K."/>
            <person name="Sato H."/>
            <person name="Nagai K."/>
            <person name="Kimura K."/>
            <person name="Makita H."/>
            <person name="Sekine M."/>
            <person name="Obayashi M."/>
            <person name="Nishi T."/>
            <person name="Shibahara T."/>
            <person name="Tanaka T."/>
            <person name="Ishii S."/>
            <person name="Yamamoto J."/>
            <person name="Saito K."/>
            <person name="Kawai Y."/>
            <person name="Isono Y."/>
            <person name="Nakamura Y."/>
            <person name="Nagahari K."/>
            <person name="Murakami K."/>
            <person name="Yasuda T."/>
            <person name="Iwayanagi T."/>
            <person name="Wagatsuma M."/>
            <person name="Shiratori A."/>
            <person name="Sudo H."/>
            <person name="Hosoiri T."/>
            <person name="Kaku Y."/>
            <person name="Kodaira H."/>
            <person name="Kondo H."/>
            <person name="Sugawara M."/>
            <person name="Takahashi M."/>
            <person name="Kanda K."/>
            <person name="Yokoi T."/>
            <person name="Furuya T."/>
            <person name="Kikkawa E."/>
            <person name="Omura Y."/>
            <person name="Abe K."/>
            <person name="Kamihara K."/>
            <person name="Katsuta N."/>
            <person name="Sato K."/>
            <person name="Tanikawa M."/>
            <person name="Yamazaki M."/>
            <person name="Ninomiya K."/>
            <person name="Ishibashi T."/>
            <person name="Yamashita H."/>
            <person name="Murakawa K."/>
            <person name="Fujimori K."/>
            <person name="Tanai H."/>
            <person name="Kimata M."/>
            <person name="Watanabe M."/>
            <person name="Hiraoka S."/>
            <person name="Chiba Y."/>
            <person name="Ishida S."/>
            <person name="Ono Y."/>
            <person name="Takiguchi S."/>
            <person name="Watanabe S."/>
            <person name="Yosida M."/>
            <person name="Hotuta T."/>
            <person name="Kusano J."/>
            <person name="Kanehori K."/>
            <person name="Takahashi-Fujii A."/>
            <person name="Hara H."/>
            <person name="Tanase T.-O."/>
            <person name="Nomura Y."/>
            <person name="Togiya S."/>
            <person name="Komai F."/>
            <person name="Hara R."/>
            <person name="Takeuchi K."/>
            <person name="Arita M."/>
            <person name="Imose N."/>
            <person name="Musashino K."/>
            <person name="Yuuki H."/>
            <person name="Oshima A."/>
            <person name="Sasaki N."/>
            <person name="Aotsuka S."/>
            <person name="Yoshikawa Y."/>
            <person name="Matsunawa H."/>
            <person name="Ichihara T."/>
            <person name="Shiohata N."/>
            <person name="Sano S."/>
            <person name="Moriya S."/>
            <person name="Momiyama H."/>
            <person name="Satoh N."/>
            <person name="Takami S."/>
            <person name="Terashima Y."/>
            <person name="Suzuki O."/>
            <person name="Nakagawa S."/>
            <person name="Senoh A."/>
            <person name="Mizoguchi H."/>
            <person name="Goto Y."/>
            <person name="Shimizu F."/>
            <person name="Wakebe H."/>
            <person name="Hishigaki H."/>
            <person name="Watanabe T."/>
            <person name="Sugiyama A."/>
            <person name="Takemoto M."/>
            <person name="Kawakami B."/>
            <person name="Yamazaki M."/>
            <person name="Watanabe K."/>
            <person name="Kumagai A."/>
            <person name="Itakura S."/>
            <person name="Fukuzumi Y."/>
            <person name="Fujimori Y."/>
            <person name="Komiyama M."/>
            <person name="Tashiro H."/>
            <person name="Tanigami A."/>
            <person name="Fujiwara T."/>
            <person name="Ono T."/>
            <person name="Yamada K."/>
            <person name="Fujii Y."/>
            <person name="Ozaki K."/>
            <person name="Hirao M."/>
            <person name="Ohmori Y."/>
            <person name="Kawabata A."/>
            <person name="Hikiji T."/>
            <person name="Kobatake N."/>
            <person name="Inagaki H."/>
            <person name="Ikema Y."/>
            <person name="Okamoto S."/>
            <person name="Okitani R."/>
            <person name="Kawakami T."/>
            <person name="Noguchi S."/>
            <person name="Itoh T."/>
            <person name="Shigeta K."/>
            <person name="Senba T."/>
            <person name="Matsumura K."/>
            <person name="Nakajima Y."/>
            <person name="Mizuno T."/>
            <person name="Morinaga M."/>
            <person name="Sasaki M."/>
            <person name="Togashi T."/>
            <person name="Oyama M."/>
            <person name="Hata H."/>
            <person name="Watanabe M."/>
            <person name="Komatsu T."/>
            <person name="Mizushima-Sugano J."/>
            <person name="Satoh T."/>
            <person name="Shirai Y."/>
            <person name="Takahashi Y."/>
            <person name="Nakagawa K."/>
            <person name="Okumura K."/>
            <person name="Nagase T."/>
            <person name="Nomura N."/>
            <person name="Kikuchi H."/>
            <person name="Masuho Y."/>
            <person name="Yamashita R."/>
            <person name="Nakai K."/>
            <person name="Yada T."/>
            <person name="Nakamura Y."/>
            <person name="Ohara O."/>
            <person name="Isogai T."/>
            <person name="Sugano S."/>
        </authorList>
    </citation>
    <scope>NUCLEOTIDE SEQUENCE [LARGE SCALE MRNA] (ISOFORMS 1 AND 2)</scope>
    <source>
        <tissue>Brain</tissue>
        <tissue>Trachea</tissue>
    </source>
</reference>
<reference key="6">
    <citation type="journal article" date="2005" name="Nature">
        <title>The DNA sequence of the human X chromosome.</title>
        <authorList>
            <person name="Ross M.T."/>
            <person name="Grafham D.V."/>
            <person name="Coffey A.J."/>
            <person name="Scherer S."/>
            <person name="McLay K."/>
            <person name="Muzny D."/>
            <person name="Platzer M."/>
            <person name="Howell G.R."/>
            <person name="Burrows C."/>
            <person name="Bird C.P."/>
            <person name="Frankish A."/>
            <person name="Lovell F.L."/>
            <person name="Howe K.L."/>
            <person name="Ashurst J.L."/>
            <person name="Fulton R.S."/>
            <person name="Sudbrak R."/>
            <person name="Wen G."/>
            <person name="Jones M.C."/>
            <person name="Hurles M.E."/>
            <person name="Andrews T.D."/>
            <person name="Scott C.E."/>
            <person name="Searle S."/>
            <person name="Ramser J."/>
            <person name="Whittaker A."/>
            <person name="Deadman R."/>
            <person name="Carter N.P."/>
            <person name="Hunt S.E."/>
            <person name="Chen R."/>
            <person name="Cree A."/>
            <person name="Gunaratne P."/>
            <person name="Havlak P."/>
            <person name="Hodgson A."/>
            <person name="Metzker M.L."/>
            <person name="Richards S."/>
            <person name="Scott G."/>
            <person name="Steffen D."/>
            <person name="Sodergren E."/>
            <person name="Wheeler D.A."/>
            <person name="Worley K.C."/>
            <person name="Ainscough R."/>
            <person name="Ambrose K.D."/>
            <person name="Ansari-Lari M.A."/>
            <person name="Aradhya S."/>
            <person name="Ashwell R.I."/>
            <person name="Babbage A.K."/>
            <person name="Bagguley C.L."/>
            <person name="Ballabio A."/>
            <person name="Banerjee R."/>
            <person name="Barker G.E."/>
            <person name="Barlow K.F."/>
            <person name="Barrett I.P."/>
            <person name="Bates K.N."/>
            <person name="Beare D.M."/>
            <person name="Beasley H."/>
            <person name="Beasley O."/>
            <person name="Beck A."/>
            <person name="Bethel G."/>
            <person name="Blechschmidt K."/>
            <person name="Brady N."/>
            <person name="Bray-Allen S."/>
            <person name="Bridgeman A.M."/>
            <person name="Brown A.J."/>
            <person name="Brown M.J."/>
            <person name="Bonnin D."/>
            <person name="Bruford E.A."/>
            <person name="Buhay C."/>
            <person name="Burch P."/>
            <person name="Burford D."/>
            <person name="Burgess J."/>
            <person name="Burrill W."/>
            <person name="Burton J."/>
            <person name="Bye J.M."/>
            <person name="Carder C."/>
            <person name="Carrel L."/>
            <person name="Chako J."/>
            <person name="Chapman J.C."/>
            <person name="Chavez D."/>
            <person name="Chen E."/>
            <person name="Chen G."/>
            <person name="Chen Y."/>
            <person name="Chen Z."/>
            <person name="Chinault C."/>
            <person name="Ciccodicola A."/>
            <person name="Clark S.Y."/>
            <person name="Clarke G."/>
            <person name="Clee C.M."/>
            <person name="Clegg S."/>
            <person name="Clerc-Blankenburg K."/>
            <person name="Clifford K."/>
            <person name="Cobley V."/>
            <person name="Cole C.G."/>
            <person name="Conquer J.S."/>
            <person name="Corby N."/>
            <person name="Connor R.E."/>
            <person name="David R."/>
            <person name="Davies J."/>
            <person name="Davis C."/>
            <person name="Davis J."/>
            <person name="Delgado O."/>
            <person name="Deshazo D."/>
            <person name="Dhami P."/>
            <person name="Ding Y."/>
            <person name="Dinh H."/>
            <person name="Dodsworth S."/>
            <person name="Draper H."/>
            <person name="Dugan-Rocha S."/>
            <person name="Dunham A."/>
            <person name="Dunn M."/>
            <person name="Durbin K.J."/>
            <person name="Dutta I."/>
            <person name="Eades T."/>
            <person name="Ellwood M."/>
            <person name="Emery-Cohen A."/>
            <person name="Errington H."/>
            <person name="Evans K.L."/>
            <person name="Faulkner L."/>
            <person name="Francis F."/>
            <person name="Frankland J."/>
            <person name="Fraser A.E."/>
            <person name="Galgoczy P."/>
            <person name="Gilbert J."/>
            <person name="Gill R."/>
            <person name="Gloeckner G."/>
            <person name="Gregory S.G."/>
            <person name="Gribble S."/>
            <person name="Griffiths C."/>
            <person name="Grocock R."/>
            <person name="Gu Y."/>
            <person name="Gwilliam R."/>
            <person name="Hamilton C."/>
            <person name="Hart E.A."/>
            <person name="Hawes A."/>
            <person name="Heath P.D."/>
            <person name="Heitmann K."/>
            <person name="Hennig S."/>
            <person name="Hernandez J."/>
            <person name="Hinzmann B."/>
            <person name="Ho S."/>
            <person name="Hoffs M."/>
            <person name="Howden P.J."/>
            <person name="Huckle E.J."/>
            <person name="Hume J."/>
            <person name="Hunt P.J."/>
            <person name="Hunt A.R."/>
            <person name="Isherwood J."/>
            <person name="Jacob L."/>
            <person name="Johnson D."/>
            <person name="Jones S."/>
            <person name="de Jong P.J."/>
            <person name="Joseph S.S."/>
            <person name="Keenan S."/>
            <person name="Kelly S."/>
            <person name="Kershaw J.K."/>
            <person name="Khan Z."/>
            <person name="Kioschis P."/>
            <person name="Klages S."/>
            <person name="Knights A.J."/>
            <person name="Kosiura A."/>
            <person name="Kovar-Smith C."/>
            <person name="Laird G.K."/>
            <person name="Langford C."/>
            <person name="Lawlor S."/>
            <person name="Leversha M."/>
            <person name="Lewis L."/>
            <person name="Liu W."/>
            <person name="Lloyd C."/>
            <person name="Lloyd D.M."/>
            <person name="Loulseged H."/>
            <person name="Loveland J.E."/>
            <person name="Lovell J.D."/>
            <person name="Lozado R."/>
            <person name="Lu J."/>
            <person name="Lyne R."/>
            <person name="Ma J."/>
            <person name="Maheshwari M."/>
            <person name="Matthews L.H."/>
            <person name="McDowall J."/>
            <person name="McLaren S."/>
            <person name="McMurray A."/>
            <person name="Meidl P."/>
            <person name="Meitinger T."/>
            <person name="Milne S."/>
            <person name="Miner G."/>
            <person name="Mistry S.L."/>
            <person name="Morgan M."/>
            <person name="Morris S."/>
            <person name="Mueller I."/>
            <person name="Mullikin J.C."/>
            <person name="Nguyen N."/>
            <person name="Nordsiek G."/>
            <person name="Nyakatura G."/>
            <person name="O'dell C.N."/>
            <person name="Okwuonu G."/>
            <person name="Palmer S."/>
            <person name="Pandian R."/>
            <person name="Parker D."/>
            <person name="Parrish J."/>
            <person name="Pasternak S."/>
            <person name="Patel D."/>
            <person name="Pearce A.V."/>
            <person name="Pearson D.M."/>
            <person name="Pelan S.E."/>
            <person name="Perez L."/>
            <person name="Porter K.M."/>
            <person name="Ramsey Y."/>
            <person name="Reichwald K."/>
            <person name="Rhodes S."/>
            <person name="Ridler K.A."/>
            <person name="Schlessinger D."/>
            <person name="Schueler M.G."/>
            <person name="Sehra H.K."/>
            <person name="Shaw-Smith C."/>
            <person name="Shen H."/>
            <person name="Sheridan E.M."/>
            <person name="Shownkeen R."/>
            <person name="Skuce C.D."/>
            <person name="Smith M.L."/>
            <person name="Sotheran E.C."/>
            <person name="Steingruber H.E."/>
            <person name="Steward C.A."/>
            <person name="Storey R."/>
            <person name="Swann R.M."/>
            <person name="Swarbreck D."/>
            <person name="Tabor P.E."/>
            <person name="Taudien S."/>
            <person name="Taylor T."/>
            <person name="Teague B."/>
            <person name="Thomas K."/>
            <person name="Thorpe A."/>
            <person name="Timms K."/>
            <person name="Tracey A."/>
            <person name="Trevanion S."/>
            <person name="Tromans A.C."/>
            <person name="d'Urso M."/>
            <person name="Verduzco D."/>
            <person name="Villasana D."/>
            <person name="Waldron L."/>
            <person name="Wall M."/>
            <person name="Wang Q."/>
            <person name="Warren J."/>
            <person name="Warry G.L."/>
            <person name="Wei X."/>
            <person name="West A."/>
            <person name="Whitehead S.L."/>
            <person name="Whiteley M.N."/>
            <person name="Wilkinson J.E."/>
            <person name="Willey D.L."/>
            <person name="Williams G."/>
            <person name="Williams L."/>
            <person name="Williamson A."/>
            <person name="Williamson H."/>
            <person name="Wilming L."/>
            <person name="Woodmansey R.L."/>
            <person name="Wray P.W."/>
            <person name="Yen J."/>
            <person name="Zhang J."/>
            <person name="Zhou J."/>
            <person name="Zoghbi H."/>
            <person name="Zorilla S."/>
            <person name="Buck D."/>
            <person name="Reinhardt R."/>
            <person name="Poustka A."/>
            <person name="Rosenthal A."/>
            <person name="Lehrach H."/>
            <person name="Meindl A."/>
            <person name="Minx P.J."/>
            <person name="Hillier L.W."/>
            <person name="Willard H.F."/>
            <person name="Wilson R.K."/>
            <person name="Waterston R.H."/>
            <person name="Rice C.M."/>
            <person name="Vaudin M."/>
            <person name="Coulson A."/>
            <person name="Nelson D.L."/>
            <person name="Weinstock G."/>
            <person name="Sulston J.E."/>
            <person name="Durbin R.M."/>
            <person name="Hubbard T."/>
            <person name="Gibbs R.A."/>
            <person name="Beck S."/>
            <person name="Rogers J."/>
            <person name="Bentley D.R."/>
        </authorList>
    </citation>
    <scope>NUCLEOTIDE SEQUENCE [LARGE SCALE GENOMIC DNA]</scope>
</reference>
<reference key="7">
    <citation type="submission" date="2005-09" db="EMBL/GenBank/DDBJ databases">
        <authorList>
            <person name="Mural R.J."/>
            <person name="Istrail S."/>
            <person name="Sutton G.G."/>
            <person name="Florea L."/>
            <person name="Halpern A.L."/>
            <person name="Mobarry C.M."/>
            <person name="Lippert R."/>
            <person name="Walenz B."/>
            <person name="Shatkay H."/>
            <person name="Dew I."/>
            <person name="Miller J.R."/>
            <person name="Flanigan M.J."/>
            <person name="Edwards N.J."/>
            <person name="Bolanos R."/>
            <person name="Fasulo D."/>
            <person name="Halldorsson B.V."/>
            <person name="Hannenhalli S."/>
            <person name="Turner R."/>
            <person name="Yooseph S."/>
            <person name="Lu F."/>
            <person name="Nusskern D.R."/>
            <person name="Shue B.C."/>
            <person name="Zheng X.H."/>
            <person name="Zhong F."/>
            <person name="Delcher A.L."/>
            <person name="Huson D.H."/>
            <person name="Kravitz S.A."/>
            <person name="Mouchard L."/>
            <person name="Reinert K."/>
            <person name="Remington K.A."/>
            <person name="Clark A.G."/>
            <person name="Waterman M.S."/>
            <person name="Eichler E.E."/>
            <person name="Adams M.D."/>
            <person name="Hunkapiller M.W."/>
            <person name="Myers E.W."/>
            <person name="Venter J.C."/>
        </authorList>
    </citation>
    <scope>NUCLEOTIDE SEQUENCE [LARGE SCALE GENOMIC DNA]</scope>
</reference>
<reference key="8">
    <citation type="journal article" date="2004" name="Genome Res.">
        <title>The status, quality, and expansion of the NIH full-length cDNA project: the Mammalian Gene Collection (MGC).</title>
        <authorList>
            <consortium name="The MGC Project Team"/>
        </authorList>
    </citation>
    <scope>NUCLEOTIDE SEQUENCE [LARGE SCALE MRNA] (ISOFORM 1)</scope>
    <source>
        <tissue>Skin</tissue>
    </source>
</reference>
<reference key="9">
    <citation type="journal article" date="2011" name="Sci. Signal.">
        <title>System-wide temporal characterization of the proteome and phosphoproteome of human embryonic stem cell differentiation.</title>
        <authorList>
            <person name="Rigbolt K.T."/>
            <person name="Prokhorova T.A."/>
            <person name="Akimov V."/>
            <person name="Henningsen J."/>
            <person name="Johansen P.T."/>
            <person name="Kratchmarova I."/>
            <person name="Kassem M."/>
            <person name="Mann M."/>
            <person name="Olsen J.V."/>
            <person name="Blagoev B."/>
        </authorList>
    </citation>
    <scope>PHOSPHORYLATION [LARGE SCALE ANALYSIS] AT SER-357</scope>
    <scope>IDENTIFICATION BY MASS SPECTROMETRY [LARGE SCALE ANALYSIS]</scope>
</reference>
<reference key="10">
    <citation type="journal article" date="2000" name="Hum. Mol. Genet.">
        <title>Mutational analysis of the GPC3/GPC4 glypican gene cluster on Xq26 in patients with Simpson-Golabi-Behmel syndrome: identification of loss-of-function mutations in the GPC3 gene.</title>
        <authorList>
            <person name="Veugelers M."/>
            <person name="Cat B.D."/>
            <person name="Muyldermans S.Y."/>
            <person name="Reekmans G."/>
            <person name="Delande N."/>
            <person name="Frints S."/>
            <person name="Legius E."/>
            <person name="Fryns J.-P."/>
            <person name="Schrander-Stumpel C."/>
            <person name="Weidle B."/>
            <person name="Magdalena N."/>
            <person name="David G."/>
        </authorList>
    </citation>
    <scope>VARIANTS ASP-391 AND VAL-442</scope>
</reference>
<reference key="11">
    <citation type="journal article" date="2018" name="Am. J. Hum. Genet.">
        <title>WNT signaling perturbations underlie the genetic heterogeneity of Robinow syndrome.</title>
        <authorList>
            <consortium name="Baylor-Hopkins Center for Mendelian Genomics"/>
            <person name="White J.J."/>
            <person name="Mazzeu J.F."/>
            <person name="Coban-Akdemir Z."/>
            <person name="Bayram Y."/>
            <person name="Bahrambeigi V."/>
            <person name="Hoischen A."/>
            <person name="van Bon B.W.M."/>
            <person name="Gezdirici A."/>
            <person name="Gulec E.Y."/>
            <person name="Ramond F."/>
            <person name="Touraine R."/>
            <person name="Thevenon J."/>
            <person name="Shinawi M."/>
            <person name="Beaver E."/>
            <person name="Heeley J."/>
            <person name="Hoover-Fong J."/>
            <person name="Durmaz C.D."/>
            <person name="Karabulut H.G."/>
            <person name="Marzioglu-Ozdemir E."/>
            <person name="Cayir A."/>
            <person name="Duz M.B."/>
            <person name="Seven M."/>
            <person name="Price S."/>
            <person name="Ferreira B.M."/>
            <person name="Vianna-Morgante A.M."/>
            <person name="Ellard S."/>
            <person name="Parrish A."/>
            <person name="Stals K."/>
            <person name="Flores-Daboub J."/>
            <person name="Jhangiani S.N."/>
            <person name="Gibbs R.A."/>
            <person name="Brunner H.G."/>
            <person name="Sutton V.R."/>
            <person name="Lupski J.R."/>
            <person name="Carvalho C.M.B."/>
        </authorList>
    </citation>
    <scope>VARIANT LYS-412</scope>
</reference>
<reference key="12">
    <citation type="journal article" date="2019" name="Am. J. Hum. Genet.">
        <title>Pathogenic variants in GPC4 cause Keipert Syndrome.</title>
        <authorList>
            <person name="Amor D.J."/>
            <person name="Stephenson S.E.M."/>
            <person name="Mustapha M."/>
            <person name="Mensah M.A."/>
            <person name="Ockeloen C.W."/>
            <person name="Lee W.S."/>
            <person name="Tankard R.M."/>
            <person name="Phelan D.G."/>
            <person name="Shinawi M."/>
            <person name="de Brouwer A.P.M."/>
            <person name="Pfundt R."/>
            <person name="Dowling C."/>
            <person name="Toler T.L."/>
            <person name="Sutton V.R."/>
            <person name="Agolini E."/>
            <person name="Rinelli M."/>
            <person name="Capolino R."/>
            <person name="Martinelli D."/>
            <person name="Zampino G."/>
            <person name="Dumic M."/>
            <person name="Reardon W."/>
            <person name="Shaw-Smith C."/>
            <person name="Leventer R.J."/>
            <person name="Delatycki M.B."/>
            <person name="Kleefstra T."/>
            <person name="Mundlos S."/>
            <person name="Mortier G."/>
            <person name="Bahlo M."/>
            <person name="Allen N.J."/>
            <person name="Lockhart P.J."/>
        </authorList>
    </citation>
    <scope>VARIANTS KPTS 496-GLU--ARG-556 DEL AND 506-GLN--ARG-556 DEL</scope>
    <scope>CHARACTERIZATION OF VARIANTS KPTS 496-GLU--ARG-556 DEL AND 506-GLN--ARG-556 DEL</scope>
    <scope>INVOLVEMENT IN KPTS</scope>
</reference>
<name>GPC4_HUMAN</name>